<keyword id="KW-0066">ATP synthesis</keyword>
<keyword id="KW-0997">Cell inner membrane</keyword>
<keyword id="KW-1003">Cell membrane</keyword>
<keyword id="KW-0138">CF(0)</keyword>
<keyword id="KW-0375">Hydrogen ion transport</keyword>
<keyword id="KW-0406">Ion transport</keyword>
<keyword id="KW-0472">Membrane</keyword>
<keyword id="KW-1185">Reference proteome</keyword>
<keyword id="KW-0812">Transmembrane</keyword>
<keyword id="KW-1133">Transmembrane helix</keyword>
<keyword id="KW-0813">Transport</keyword>
<feature type="chain" id="PRO_0000362245" description="ATP synthase subunit a">
    <location>
        <begin position="1"/>
        <end position="253"/>
    </location>
</feature>
<feature type="transmembrane region" description="Helical" evidence="1">
    <location>
        <begin position="30"/>
        <end position="50"/>
    </location>
</feature>
<feature type="transmembrane region" description="Helical" evidence="1">
    <location>
        <begin position="88"/>
        <end position="108"/>
    </location>
</feature>
<feature type="transmembrane region" description="Helical" evidence="1">
    <location>
        <begin position="118"/>
        <end position="138"/>
    </location>
</feature>
<feature type="transmembrane region" description="Helical" evidence="1">
    <location>
        <begin position="144"/>
        <end position="164"/>
    </location>
</feature>
<feature type="transmembrane region" description="Helical" evidence="1">
    <location>
        <begin position="184"/>
        <end position="204"/>
    </location>
</feature>
<feature type="transmembrane region" description="Helical" evidence="1">
    <location>
        <begin position="211"/>
        <end position="231"/>
    </location>
</feature>
<organism>
    <name type="scientific">Beijerinckia indica subsp. indica (strain ATCC 9039 / DSM 1715 / NCIMB 8712)</name>
    <dbReference type="NCBI Taxonomy" id="395963"/>
    <lineage>
        <taxon>Bacteria</taxon>
        <taxon>Pseudomonadati</taxon>
        <taxon>Pseudomonadota</taxon>
        <taxon>Alphaproteobacteria</taxon>
        <taxon>Hyphomicrobiales</taxon>
        <taxon>Beijerinckiaceae</taxon>
        <taxon>Beijerinckia</taxon>
    </lineage>
</organism>
<reference key="1">
    <citation type="journal article" date="2010" name="J. Bacteriol.">
        <title>Complete genome sequence of Beijerinckia indica subsp. indica.</title>
        <authorList>
            <person name="Tamas I."/>
            <person name="Dedysh S.N."/>
            <person name="Liesack W."/>
            <person name="Stott M.B."/>
            <person name="Alam M."/>
            <person name="Murrell J.C."/>
            <person name="Dunfield P.F."/>
        </authorList>
    </citation>
    <scope>NUCLEOTIDE SEQUENCE [LARGE SCALE GENOMIC DNA]</scope>
    <source>
        <strain>ATCC 9039 / DSM 1715 / NCIMB 8712</strain>
    </source>
</reference>
<proteinExistence type="inferred from homology"/>
<protein>
    <recommendedName>
        <fullName evidence="1">ATP synthase subunit a</fullName>
    </recommendedName>
    <alternativeName>
        <fullName evidence="1">ATP synthase F0 sector subunit a</fullName>
    </alternativeName>
    <alternativeName>
        <fullName evidence="1">F-ATPase subunit 6</fullName>
    </alternativeName>
</protein>
<sequence>MAEPHEIDPIHQFHIDRIIPLHFLGTDVSFTNAAFFMLVIVALASLVLLAGTRNHSLVPGRLQSIAEVSYEFIASTLQLSSGRDGMRFFPFVFSIFMFVFLANLIGLVPYTFTVTSQIAVTFGLAMIVIGTVVIYGLIKHGTHFLGIFAPSGVSPLLLPFMIMIEVISFISRPISLSIRLFANMLAGHITLKVMGGFVAGLLGAGSVYALVAPLPLAMVVIFTAFELLVAFLQAYVFTILTCVYLNDAVHPGH</sequence>
<gene>
    <name evidence="1" type="primary">atpB</name>
    <name type="ordered locus">Bind_0743</name>
</gene>
<dbReference type="EMBL" id="CP001016">
    <property type="protein sequence ID" value="ACB94393.1"/>
    <property type="molecule type" value="Genomic_DNA"/>
</dbReference>
<dbReference type="RefSeq" id="WP_012383750.1">
    <property type="nucleotide sequence ID" value="NC_010581.1"/>
</dbReference>
<dbReference type="SMR" id="B2IGL1"/>
<dbReference type="STRING" id="395963.Bind_0743"/>
<dbReference type="KEGG" id="bid:Bind_0743"/>
<dbReference type="eggNOG" id="COG0356">
    <property type="taxonomic scope" value="Bacteria"/>
</dbReference>
<dbReference type="HOGENOM" id="CLU_041018_0_2_5"/>
<dbReference type="OrthoDB" id="9809130at2"/>
<dbReference type="Proteomes" id="UP000001695">
    <property type="component" value="Chromosome"/>
</dbReference>
<dbReference type="GO" id="GO:0005886">
    <property type="term" value="C:plasma membrane"/>
    <property type="evidence" value="ECO:0007669"/>
    <property type="project" value="UniProtKB-SubCell"/>
</dbReference>
<dbReference type="GO" id="GO:0045259">
    <property type="term" value="C:proton-transporting ATP synthase complex"/>
    <property type="evidence" value="ECO:0007669"/>
    <property type="project" value="UniProtKB-KW"/>
</dbReference>
<dbReference type="GO" id="GO:0046933">
    <property type="term" value="F:proton-transporting ATP synthase activity, rotational mechanism"/>
    <property type="evidence" value="ECO:0007669"/>
    <property type="project" value="UniProtKB-UniRule"/>
</dbReference>
<dbReference type="CDD" id="cd00310">
    <property type="entry name" value="ATP-synt_Fo_a_6"/>
    <property type="match status" value="1"/>
</dbReference>
<dbReference type="FunFam" id="1.20.120.220:FF:000003">
    <property type="entry name" value="ATP synthase subunit a"/>
    <property type="match status" value="1"/>
</dbReference>
<dbReference type="Gene3D" id="1.20.120.220">
    <property type="entry name" value="ATP synthase, F0 complex, subunit A"/>
    <property type="match status" value="1"/>
</dbReference>
<dbReference type="HAMAP" id="MF_01393">
    <property type="entry name" value="ATP_synth_a_bact"/>
    <property type="match status" value="1"/>
</dbReference>
<dbReference type="InterPro" id="IPR000568">
    <property type="entry name" value="ATP_synth_F0_asu"/>
</dbReference>
<dbReference type="InterPro" id="IPR023011">
    <property type="entry name" value="ATP_synth_F0_asu_AS"/>
</dbReference>
<dbReference type="InterPro" id="IPR045083">
    <property type="entry name" value="ATP_synth_F0_asu_bact/mt"/>
</dbReference>
<dbReference type="InterPro" id="IPR035908">
    <property type="entry name" value="F0_ATP_A_sf"/>
</dbReference>
<dbReference type="NCBIfam" id="TIGR01131">
    <property type="entry name" value="ATP_synt_6_or_A"/>
    <property type="match status" value="1"/>
</dbReference>
<dbReference type="NCBIfam" id="NF004482">
    <property type="entry name" value="PRK05815.2-4"/>
    <property type="match status" value="1"/>
</dbReference>
<dbReference type="PANTHER" id="PTHR11410">
    <property type="entry name" value="ATP SYNTHASE SUBUNIT A"/>
    <property type="match status" value="1"/>
</dbReference>
<dbReference type="PANTHER" id="PTHR11410:SF0">
    <property type="entry name" value="ATP SYNTHASE SUBUNIT A"/>
    <property type="match status" value="1"/>
</dbReference>
<dbReference type="Pfam" id="PF00119">
    <property type="entry name" value="ATP-synt_A"/>
    <property type="match status" value="1"/>
</dbReference>
<dbReference type="PRINTS" id="PR00123">
    <property type="entry name" value="ATPASEA"/>
</dbReference>
<dbReference type="SUPFAM" id="SSF81336">
    <property type="entry name" value="F1F0 ATP synthase subunit A"/>
    <property type="match status" value="1"/>
</dbReference>
<dbReference type="PROSITE" id="PS00449">
    <property type="entry name" value="ATPASE_A"/>
    <property type="match status" value="1"/>
</dbReference>
<evidence type="ECO:0000255" key="1">
    <source>
        <dbReference type="HAMAP-Rule" id="MF_01393"/>
    </source>
</evidence>
<comment type="function">
    <text evidence="1">Key component of the proton channel; it plays a direct role in the translocation of protons across the membrane.</text>
</comment>
<comment type="subunit">
    <text evidence="1">F-type ATPases have 2 components, CF(1) - the catalytic core - and CF(0) - the membrane proton channel. CF(1) has five subunits: alpha(3), beta(3), gamma(1), delta(1), epsilon(1). CF(0) has three main subunits: a(1), b(2) and c(9-12). The alpha and beta chains form an alternating ring which encloses part of the gamma chain. CF(1) is attached to CF(0) by a central stalk formed by the gamma and epsilon chains, while a peripheral stalk is formed by the delta and b chains.</text>
</comment>
<comment type="subcellular location">
    <subcellularLocation>
        <location evidence="1">Cell inner membrane</location>
        <topology evidence="1">Multi-pass membrane protein</topology>
    </subcellularLocation>
</comment>
<comment type="similarity">
    <text evidence="1">Belongs to the ATPase A chain family.</text>
</comment>
<name>ATP6_BEII9</name>
<accession>B2IGL1</accession>